<dbReference type="EMBL" id="CP000880">
    <property type="protein sequence ID" value="ABX20453.1"/>
    <property type="molecule type" value="Genomic_DNA"/>
</dbReference>
<dbReference type="SMR" id="A9MJ53"/>
<dbReference type="STRING" id="41514.SARI_00527"/>
<dbReference type="KEGG" id="ses:SARI_00527"/>
<dbReference type="HOGENOM" id="CLU_001265_10_3_6"/>
<dbReference type="Proteomes" id="UP000002084">
    <property type="component" value="Chromosome"/>
</dbReference>
<dbReference type="GO" id="GO:0005886">
    <property type="term" value="C:plasma membrane"/>
    <property type="evidence" value="ECO:0007669"/>
    <property type="project" value="UniProtKB-SubCell"/>
</dbReference>
<dbReference type="GO" id="GO:0022857">
    <property type="term" value="F:transmembrane transporter activity"/>
    <property type="evidence" value="ECO:0007669"/>
    <property type="project" value="UniProtKB-UniRule"/>
</dbReference>
<dbReference type="CDD" id="cd17489">
    <property type="entry name" value="MFS_YfcJ_like"/>
    <property type="match status" value="1"/>
</dbReference>
<dbReference type="Gene3D" id="1.20.1250.20">
    <property type="entry name" value="MFS general substrate transporter like domains"/>
    <property type="match status" value="1"/>
</dbReference>
<dbReference type="HAMAP" id="MF_02091">
    <property type="entry name" value="MFS_YfcJ"/>
    <property type="match status" value="1"/>
</dbReference>
<dbReference type="InterPro" id="IPR011701">
    <property type="entry name" value="MFS"/>
</dbReference>
<dbReference type="InterPro" id="IPR020846">
    <property type="entry name" value="MFS_dom"/>
</dbReference>
<dbReference type="InterPro" id="IPR036259">
    <property type="entry name" value="MFS_trans_sf"/>
</dbReference>
<dbReference type="InterPro" id="IPR050171">
    <property type="entry name" value="MFS_Transporters"/>
</dbReference>
<dbReference type="InterPro" id="IPR037541">
    <property type="entry name" value="MFS_YfcJ"/>
</dbReference>
<dbReference type="NCBIfam" id="NF003477">
    <property type="entry name" value="PRK05122.1"/>
    <property type="match status" value="1"/>
</dbReference>
<dbReference type="NCBIfam" id="NF009048">
    <property type="entry name" value="PRK12382.1"/>
    <property type="match status" value="1"/>
</dbReference>
<dbReference type="PANTHER" id="PTHR23517:SF1">
    <property type="match status" value="1"/>
</dbReference>
<dbReference type="PANTHER" id="PTHR23517">
    <property type="entry name" value="RESISTANCE PROTEIN MDTM, PUTATIVE-RELATED-RELATED"/>
    <property type="match status" value="1"/>
</dbReference>
<dbReference type="Pfam" id="PF07690">
    <property type="entry name" value="MFS_1"/>
    <property type="match status" value="1"/>
</dbReference>
<dbReference type="SUPFAM" id="SSF103473">
    <property type="entry name" value="MFS general substrate transporter"/>
    <property type="match status" value="1"/>
</dbReference>
<dbReference type="PROSITE" id="PS50850">
    <property type="entry name" value="MFS"/>
    <property type="match status" value="1"/>
</dbReference>
<comment type="subcellular location">
    <subcellularLocation>
        <location evidence="1">Cell inner membrane</location>
        <topology evidence="1">Multi-pass membrane protein</topology>
    </subcellularLocation>
</comment>
<comment type="similarity">
    <text evidence="1">Belongs to the major facilitator superfamily. YfcJ family.</text>
</comment>
<evidence type="ECO:0000255" key="1">
    <source>
        <dbReference type="HAMAP-Rule" id="MF_02091"/>
    </source>
</evidence>
<keyword id="KW-0997">Cell inner membrane</keyword>
<keyword id="KW-1003">Cell membrane</keyword>
<keyword id="KW-0472">Membrane</keyword>
<keyword id="KW-1185">Reference proteome</keyword>
<keyword id="KW-0812">Transmembrane</keyword>
<keyword id="KW-1133">Transmembrane helix</keyword>
<keyword id="KW-0813">Transport</keyword>
<gene>
    <name evidence="1" type="primary">yfcJ</name>
    <name type="ordered locus">SARI_00527</name>
</gene>
<protein>
    <recommendedName>
        <fullName evidence="1">Uncharacterized MFS-type transporter YfcJ</fullName>
    </recommendedName>
</protein>
<feature type="chain" id="PRO_1000084995" description="Uncharacterized MFS-type transporter YfcJ">
    <location>
        <begin position="1"/>
        <end position="392"/>
    </location>
</feature>
<feature type="transmembrane region" description="Helical" evidence="1">
    <location>
        <begin position="22"/>
        <end position="42"/>
    </location>
</feature>
<feature type="transmembrane region" description="Helical" evidence="1">
    <location>
        <begin position="46"/>
        <end position="66"/>
    </location>
</feature>
<feature type="transmembrane region" description="Helical" evidence="1">
    <location>
        <begin position="88"/>
        <end position="108"/>
    </location>
</feature>
<feature type="transmembrane region" description="Helical" evidence="1">
    <location>
        <begin position="121"/>
        <end position="141"/>
    </location>
</feature>
<feature type="transmembrane region" description="Helical" evidence="1">
    <location>
        <begin position="151"/>
        <end position="171"/>
    </location>
</feature>
<feature type="transmembrane region" description="Helical" evidence="1">
    <location>
        <begin position="174"/>
        <end position="194"/>
    </location>
</feature>
<feature type="transmembrane region" description="Helical" evidence="1">
    <location>
        <begin position="223"/>
        <end position="243"/>
    </location>
</feature>
<feature type="transmembrane region" description="Helical" evidence="1">
    <location>
        <begin position="252"/>
        <end position="272"/>
    </location>
</feature>
<feature type="transmembrane region" description="Helical" evidence="1">
    <location>
        <begin position="276"/>
        <end position="298"/>
    </location>
</feature>
<feature type="transmembrane region" description="Helical" evidence="1">
    <location>
        <begin position="342"/>
        <end position="362"/>
    </location>
</feature>
<feature type="transmembrane region" description="Helical" evidence="1">
    <location>
        <begin position="369"/>
        <end position="389"/>
    </location>
</feature>
<reference key="1">
    <citation type="submission" date="2007-11" db="EMBL/GenBank/DDBJ databases">
        <authorList>
            <consortium name="The Salmonella enterica serovar Arizonae Genome Sequencing Project"/>
            <person name="McClelland M."/>
            <person name="Sanderson E.K."/>
            <person name="Porwollik S."/>
            <person name="Spieth J."/>
            <person name="Clifton W.S."/>
            <person name="Fulton R."/>
            <person name="Chunyan W."/>
            <person name="Wollam A."/>
            <person name="Shah N."/>
            <person name="Pepin K."/>
            <person name="Bhonagiri V."/>
            <person name="Nash W."/>
            <person name="Johnson M."/>
            <person name="Thiruvilangam P."/>
            <person name="Wilson R."/>
        </authorList>
    </citation>
    <scope>NUCLEOTIDE SEQUENCE [LARGE SCALE GENOMIC DNA]</scope>
    <source>
        <strain>ATCC BAA-731 / CDC346-86 / RSK2980</strain>
    </source>
</reference>
<proteinExistence type="inferred from homology"/>
<name>YFCJ_SALAR</name>
<accession>A9MJ53</accession>
<sequence>MTAVSQKTHTPPANFLLFRIAFAVFLTYMTVGLPLPVIPLFVRHELGYSNTMVGIAVGIQFFATVLTRGYAGRLADQYGAKRSALQGMLACGLAGAAWLLAALLPVSASVKFALLIVGRLILGFGESQLLTGTLTWGMGLVGPARSGKVMSWNGMAIYGALAAGAPLGLLIHSHFGFAALAVTTMALPLLAWAFNGTVRKVPAHAGERPSLWSVVGLIWKPGLGLALQGVGFAVIGTFISLYFASNGWAMAGFTLTAFGGAFVLMRMLFGWMPDRFGGVKVAIVSLLVETAGLLLLWLAPMAWIALVGAALTGAGCSLIFPALGVEVVKRVPSQVRGTALGGYAAFQDISYGVTGPLAGVLATSCGYSSVFLAGALSAVVGILVTILSFRRG</sequence>
<organism>
    <name type="scientific">Salmonella arizonae (strain ATCC BAA-731 / CDC346-86 / RSK2980)</name>
    <dbReference type="NCBI Taxonomy" id="41514"/>
    <lineage>
        <taxon>Bacteria</taxon>
        <taxon>Pseudomonadati</taxon>
        <taxon>Pseudomonadota</taxon>
        <taxon>Gammaproteobacteria</taxon>
        <taxon>Enterobacterales</taxon>
        <taxon>Enterobacteriaceae</taxon>
        <taxon>Salmonella</taxon>
    </lineage>
</organism>